<proteinExistence type="inferred from homology"/>
<comment type="similarity">
    <text evidence="1">Belongs to the PDCD5 family.</text>
</comment>
<dbReference type="EMBL" id="AE000782">
    <property type="protein sequence ID" value="AAB89187.1"/>
    <property type="molecule type" value="Genomic_DNA"/>
</dbReference>
<dbReference type="PIR" id="C69508">
    <property type="entry name" value="C69508"/>
</dbReference>
<dbReference type="SMR" id="O28211"/>
<dbReference type="STRING" id="224325.AF_2068"/>
<dbReference type="PaxDb" id="224325-AF_2068"/>
<dbReference type="EnsemblBacteria" id="AAB89187">
    <property type="protein sequence ID" value="AAB89187"/>
    <property type="gene ID" value="AF_2068"/>
</dbReference>
<dbReference type="KEGG" id="afu:AF_2068"/>
<dbReference type="eggNOG" id="arCOG04179">
    <property type="taxonomic scope" value="Archaea"/>
</dbReference>
<dbReference type="HOGENOM" id="CLU_122978_3_0_2"/>
<dbReference type="PhylomeDB" id="O28211"/>
<dbReference type="Proteomes" id="UP000002199">
    <property type="component" value="Chromosome"/>
</dbReference>
<dbReference type="GO" id="GO:0005829">
    <property type="term" value="C:cytosol"/>
    <property type="evidence" value="ECO:0007669"/>
    <property type="project" value="TreeGrafter"/>
</dbReference>
<dbReference type="GO" id="GO:0003677">
    <property type="term" value="F:DNA binding"/>
    <property type="evidence" value="ECO:0007669"/>
    <property type="project" value="UniProtKB-UniRule"/>
</dbReference>
<dbReference type="Gene3D" id="1.10.8.140">
    <property type="entry name" value="PDCD5-like"/>
    <property type="match status" value="1"/>
</dbReference>
<dbReference type="HAMAP" id="MF_00026">
    <property type="entry name" value="dsDNA_bind"/>
    <property type="match status" value="1"/>
</dbReference>
<dbReference type="InterPro" id="IPR022889">
    <property type="entry name" value="DNA_bind_arc"/>
</dbReference>
<dbReference type="InterPro" id="IPR002836">
    <property type="entry name" value="PDCD5-like"/>
</dbReference>
<dbReference type="InterPro" id="IPR036883">
    <property type="entry name" value="PDCD5-like_sf"/>
</dbReference>
<dbReference type="NCBIfam" id="NF003268">
    <property type="entry name" value="PRK04239.1"/>
    <property type="match status" value="1"/>
</dbReference>
<dbReference type="PANTHER" id="PTHR10840">
    <property type="entry name" value="PROGRAMMED CELL DEATH PROTEIN 5"/>
    <property type="match status" value="1"/>
</dbReference>
<dbReference type="PANTHER" id="PTHR10840:SF0">
    <property type="entry name" value="PROGRAMMED CELL DEATH PROTEIN 5"/>
    <property type="match status" value="1"/>
</dbReference>
<dbReference type="Pfam" id="PF01984">
    <property type="entry name" value="dsDNA_bind"/>
    <property type="match status" value="1"/>
</dbReference>
<dbReference type="PIRSF" id="PIRSF015730">
    <property type="entry name" value="TFAR19"/>
    <property type="match status" value="1"/>
</dbReference>
<dbReference type="SUPFAM" id="SSF46950">
    <property type="entry name" value="Double-stranded DNA-binding domain"/>
    <property type="match status" value="1"/>
</dbReference>
<evidence type="ECO:0000255" key="1">
    <source>
        <dbReference type="HAMAP-Rule" id="MF_00026"/>
    </source>
</evidence>
<keyword id="KW-0238">DNA-binding</keyword>
<keyword id="KW-1185">Reference proteome</keyword>
<sequence>MVFMDDLEEIRRRKLMELQRQKELEELQKEEMRRQVEAQKKAILRAILEPEAKERLSRLKLAHPEIAEAVENQLIYLAQAGRIQSKITDKMLVEILKRVQPKKRETRIIRK</sequence>
<organism>
    <name type="scientific">Archaeoglobus fulgidus (strain ATCC 49558 / DSM 4304 / JCM 9628 / NBRC 100126 / VC-16)</name>
    <dbReference type="NCBI Taxonomy" id="224325"/>
    <lineage>
        <taxon>Archaea</taxon>
        <taxon>Methanobacteriati</taxon>
        <taxon>Methanobacteriota</taxon>
        <taxon>Archaeoglobi</taxon>
        <taxon>Archaeoglobales</taxon>
        <taxon>Archaeoglobaceae</taxon>
        <taxon>Archaeoglobus</taxon>
    </lineage>
</organism>
<gene>
    <name type="ordered locus">AF_2068</name>
</gene>
<name>Y2068_ARCFU</name>
<reference key="1">
    <citation type="journal article" date="1997" name="Nature">
        <title>The complete genome sequence of the hyperthermophilic, sulphate-reducing archaeon Archaeoglobus fulgidus.</title>
        <authorList>
            <person name="Klenk H.-P."/>
            <person name="Clayton R.A."/>
            <person name="Tomb J.-F."/>
            <person name="White O."/>
            <person name="Nelson K.E."/>
            <person name="Ketchum K.A."/>
            <person name="Dodson R.J."/>
            <person name="Gwinn M.L."/>
            <person name="Hickey E.K."/>
            <person name="Peterson J.D."/>
            <person name="Richardson D.L."/>
            <person name="Kerlavage A.R."/>
            <person name="Graham D.E."/>
            <person name="Kyrpides N.C."/>
            <person name="Fleischmann R.D."/>
            <person name="Quackenbush J."/>
            <person name="Lee N.H."/>
            <person name="Sutton G.G."/>
            <person name="Gill S.R."/>
            <person name="Kirkness E.F."/>
            <person name="Dougherty B.A."/>
            <person name="McKenney K."/>
            <person name="Adams M.D."/>
            <person name="Loftus B.J."/>
            <person name="Peterson S.N."/>
            <person name="Reich C.I."/>
            <person name="McNeil L.K."/>
            <person name="Badger J.H."/>
            <person name="Glodek A."/>
            <person name="Zhou L."/>
            <person name="Overbeek R."/>
            <person name="Gocayne J.D."/>
            <person name="Weidman J.F."/>
            <person name="McDonald L.A."/>
            <person name="Utterback T.R."/>
            <person name="Cotton M.D."/>
            <person name="Spriggs T."/>
            <person name="Artiach P."/>
            <person name="Kaine B.P."/>
            <person name="Sykes S.M."/>
            <person name="Sadow P.W."/>
            <person name="D'Andrea K.P."/>
            <person name="Bowman C."/>
            <person name="Fujii C."/>
            <person name="Garland S.A."/>
            <person name="Mason T.M."/>
            <person name="Olsen G.J."/>
            <person name="Fraser C.M."/>
            <person name="Smith H.O."/>
            <person name="Woese C.R."/>
            <person name="Venter J.C."/>
        </authorList>
    </citation>
    <scope>NUCLEOTIDE SEQUENCE [LARGE SCALE GENOMIC DNA]</scope>
    <source>
        <strain>ATCC 49558 / DSM 4304 / JCM 9628 / NBRC 100126 / VC-16</strain>
    </source>
</reference>
<feature type="chain" id="PRO_0000121551" description="DNA-binding protein AF_2068">
    <location>
        <begin position="1"/>
        <end position="111"/>
    </location>
</feature>
<protein>
    <recommendedName>
        <fullName evidence="1">DNA-binding protein AF_2068</fullName>
    </recommendedName>
</protein>
<accession>O28211</accession>